<organism>
    <name type="scientific">Paracoccus denitrificans</name>
    <dbReference type="NCBI Taxonomy" id="266"/>
    <lineage>
        <taxon>Bacteria</taxon>
        <taxon>Pseudomonadati</taxon>
        <taxon>Pseudomonadota</taxon>
        <taxon>Alphaproteobacteria</taxon>
        <taxon>Rhodobacterales</taxon>
        <taxon>Paracoccaceae</taxon>
        <taxon>Paracoccus</taxon>
    </lineage>
</organism>
<gene>
    <name type="primary">mauE</name>
</gene>
<accession>P29896</accession>
<dbReference type="EMBL" id="X98581">
    <property type="protein sequence ID" value="CAA67189.1"/>
    <property type="molecule type" value="Genomic_DNA"/>
</dbReference>
<dbReference type="EMBL" id="M90099">
    <property type="protein sequence ID" value="AAA25581.1"/>
    <property type="molecule type" value="Genomic_DNA"/>
</dbReference>
<dbReference type="PIR" id="PH0857">
    <property type="entry name" value="PH0857"/>
</dbReference>
<dbReference type="UniPathway" id="UPA00895"/>
<dbReference type="GO" id="GO:0005886">
    <property type="term" value="C:plasma membrane"/>
    <property type="evidence" value="ECO:0007669"/>
    <property type="project" value="UniProtKB-SubCell"/>
</dbReference>
<dbReference type="GO" id="GO:0030416">
    <property type="term" value="P:methylamine metabolic process"/>
    <property type="evidence" value="ECO:0007669"/>
    <property type="project" value="InterPro"/>
</dbReference>
<dbReference type="InterPro" id="IPR009908">
    <property type="entry name" value="Methylamine_util_MauE"/>
</dbReference>
<dbReference type="Pfam" id="PF07291">
    <property type="entry name" value="MauE"/>
    <property type="match status" value="1"/>
</dbReference>
<keyword id="KW-1003">Cell membrane</keyword>
<keyword id="KW-0472">Membrane</keyword>
<keyword id="KW-0812">Transmembrane</keyword>
<keyword id="KW-1133">Transmembrane helix</keyword>
<comment type="function">
    <text>May be specifically involved in the processing, transport, and/or maturation of the MADH beta-subunit.</text>
</comment>
<comment type="pathway">
    <text>One-carbon metabolism; methylamine degradation.</text>
</comment>
<comment type="subcellular location">
    <subcellularLocation>
        <location evidence="2">Cell membrane</location>
        <topology evidence="2">Multi-pass membrane protein</topology>
    </subcellularLocation>
</comment>
<proteinExistence type="predicted"/>
<protein>
    <recommendedName>
        <fullName>Methylamine utilization protein MauE</fullName>
    </recommendedName>
</protein>
<evidence type="ECO:0000255" key="1"/>
<evidence type="ECO:0000305" key="2"/>
<name>MAUE_PARDE</name>
<sequence length="186" mass="19218">MADFLIQPMVLWALRIFLALLFVAAALSKLRHVEEFYGVVRNFRVLPDLASRVVALVLPVVEAAVAVGLVVTPLAVPAAVAAAALLLVFAAALAINVLRGRTQIDCGCFRNGLKQPVSWLLVLRNLVLTALALAIATGLPAAVPASLTEGATGLLAGATAMLIYLSASLLGGLSAAQTANKTAKGR</sequence>
<reference key="1">
    <citation type="journal article" date="1997" name="Antonie Van Leeuwenhoek">
        <title>MauE and MauD proteins are essential in methylamine metabolism of Paracoccus denitrificans.</title>
        <authorList>
            <person name="van der Palen C.J.N.M."/>
            <person name="Reijnders W.N.M."/>
            <person name="de Vries S."/>
            <person name="Duine J.A."/>
            <person name="van Spanning R.J.M."/>
        </authorList>
    </citation>
    <scope>NUCLEOTIDE SEQUENCE [GENOMIC DNA]</scope>
    <source>
        <strain>Pd 1222</strain>
    </source>
</reference>
<reference key="2">
    <citation type="journal article" date="1992" name="Biochem. Biophys. Res. Commun.">
        <title>The genetic organization of the mau gene cluster of the facultative autotroph Paracoccus denitrificans.</title>
        <authorList>
            <person name="Chistoserdov A.Y."/>
            <person name="Boyd J."/>
            <person name="Mathews F.S."/>
            <person name="Lidstrom M.E."/>
        </authorList>
    </citation>
    <scope>NUCLEOTIDE SEQUENCE [GENOMIC DNA] OF 1-64</scope>
</reference>
<feature type="chain" id="PRO_0000208935" description="Methylamine utilization protein MauE">
    <location>
        <begin position="1"/>
        <end position="186"/>
    </location>
</feature>
<feature type="transmembrane region" description="Helical" evidence="1">
    <location>
        <begin position="4"/>
        <end position="24"/>
    </location>
</feature>
<feature type="transmembrane region" description="Helical" evidence="1">
    <location>
        <begin position="53"/>
        <end position="73"/>
    </location>
</feature>
<feature type="transmembrane region" description="Helical" evidence="1">
    <location>
        <begin position="75"/>
        <end position="95"/>
    </location>
</feature>
<feature type="transmembrane region" description="Helical" evidence="1">
    <location>
        <begin position="127"/>
        <end position="147"/>
    </location>
</feature>
<feature type="transmembrane region" description="Helical" evidence="1">
    <location>
        <begin position="153"/>
        <end position="173"/>
    </location>
</feature>